<sequence length="156" mass="17953">MNKQVEIFTDGSCLGNPGPGGYGIVMRYKQVEKTLARGYRLTTNNRMEMLAAVMALQALKEPCRVILTTDSQYVRQGITQWIHNWKLRGWKTADKKPVKNADLWQALDKETARHQVEWRWVKGHAGHRENEMCDELARQAAENPTEDDIGYQPEPQ</sequence>
<reference key="1">
    <citation type="journal article" date="2008" name="PLoS ONE">
        <title>A recalibrated molecular clock and independent origins for the cholera pandemic clones.</title>
        <authorList>
            <person name="Feng L."/>
            <person name="Reeves P.R."/>
            <person name="Lan R."/>
            <person name="Ren Y."/>
            <person name="Gao C."/>
            <person name="Zhou Z."/>
            <person name="Ren Y."/>
            <person name="Cheng J."/>
            <person name="Wang W."/>
            <person name="Wang J."/>
            <person name="Qian W."/>
            <person name="Li D."/>
            <person name="Wang L."/>
        </authorList>
    </citation>
    <scope>NUCLEOTIDE SEQUENCE [LARGE SCALE GENOMIC DNA]</scope>
    <source>
        <strain>M66-2</strain>
    </source>
</reference>
<comment type="function">
    <text evidence="1">Endonuclease that specifically degrades the RNA of RNA-DNA hybrids.</text>
</comment>
<comment type="catalytic activity">
    <reaction evidence="1">
        <text>Endonucleolytic cleavage to 5'-phosphomonoester.</text>
        <dbReference type="EC" id="3.1.26.4"/>
    </reaction>
</comment>
<comment type="cofactor">
    <cofactor evidence="1">
        <name>Mg(2+)</name>
        <dbReference type="ChEBI" id="CHEBI:18420"/>
    </cofactor>
    <text evidence="1">Binds 1 Mg(2+) ion per subunit. May bind a second metal ion at a regulatory site, or after substrate binding.</text>
</comment>
<comment type="subunit">
    <text evidence="1">Monomer.</text>
</comment>
<comment type="subcellular location">
    <subcellularLocation>
        <location evidence="1">Cytoplasm</location>
    </subcellularLocation>
</comment>
<comment type="similarity">
    <text evidence="1">Belongs to the RNase H family.</text>
</comment>
<name>RNH_VIBCM</name>
<accession>C3LPN8</accession>
<organism>
    <name type="scientific">Vibrio cholerae serotype O1 (strain M66-2)</name>
    <dbReference type="NCBI Taxonomy" id="579112"/>
    <lineage>
        <taxon>Bacteria</taxon>
        <taxon>Pseudomonadati</taxon>
        <taxon>Pseudomonadota</taxon>
        <taxon>Gammaproteobacteria</taxon>
        <taxon>Vibrionales</taxon>
        <taxon>Vibrionaceae</taxon>
        <taxon>Vibrio</taxon>
    </lineage>
</organism>
<protein>
    <recommendedName>
        <fullName evidence="1">Ribonuclease H</fullName>
        <shortName evidence="1">RNase H</shortName>
        <ecNumber evidence="1">3.1.26.4</ecNumber>
    </recommendedName>
</protein>
<evidence type="ECO:0000255" key="1">
    <source>
        <dbReference type="HAMAP-Rule" id="MF_00042"/>
    </source>
</evidence>
<evidence type="ECO:0000255" key="2">
    <source>
        <dbReference type="PROSITE-ProRule" id="PRU00408"/>
    </source>
</evidence>
<evidence type="ECO:0000256" key="3">
    <source>
        <dbReference type="SAM" id="MobiDB-lite"/>
    </source>
</evidence>
<proteinExistence type="inferred from homology"/>
<gene>
    <name evidence="1" type="primary">rnhA</name>
    <name type="ordered locus">VCM66_2157</name>
</gene>
<dbReference type="EC" id="3.1.26.4" evidence="1"/>
<dbReference type="EMBL" id="CP001233">
    <property type="protein sequence ID" value="ACP06458.1"/>
    <property type="molecule type" value="Genomic_DNA"/>
</dbReference>
<dbReference type="RefSeq" id="WP_001041874.1">
    <property type="nucleotide sequence ID" value="NC_012578.1"/>
</dbReference>
<dbReference type="SMR" id="C3LPN8"/>
<dbReference type="KEGG" id="vcm:VCM66_2157"/>
<dbReference type="HOGENOM" id="CLU_030894_6_0_6"/>
<dbReference type="Proteomes" id="UP000001217">
    <property type="component" value="Chromosome I"/>
</dbReference>
<dbReference type="GO" id="GO:0005737">
    <property type="term" value="C:cytoplasm"/>
    <property type="evidence" value="ECO:0007669"/>
    <property type="project" value="UniProtKB-SubCell"/>
</dbReference>
<dbReference type="GO" id="GO:0000287">
    <property type="term" value="F:magnesium ion binding"/>
    <property type="evidence" value="ECO:0007669"/>
    <property type="project" value="UniProtKB-UniRule"/>
</dbReference>
<dbReference type="GO" id="GO:0003676">
    <property type="term" value="F:nucleic acid binding"/>
    <property type="evidence" value="ECO:0007669"/>
    <property type="project" value="InterPro"/>
</dbReference>
<dbReference type="GO" id="GO:0004523">
    <property type="term" value="F:RNA-DNA hybrid ribonuclease activity"/>
    <property type="evidence" value="ECO:0007669"/>
    <property type="project" value="UniProtKB-UniRule"/>
</dbReference>
<dbReference type="GO" id="GO:0043137">
    <property type="term" value="P:DNA replication, removal of RNA primer"/>
    <property type="evidence" value="ECO:0007669"/>
    <property type="project" value="TreeGrafter"/>
</dbReference>
<dbReference type="CDD" id="cd09278">
    <property type="entry name" value="RNase_HI_prokaryote_like"/>
    <property type="match status" value="1"/>
</dbReference>
<dbReference type="FunFam" id="3.30.420.10:FF:000008">
    <property type="entry name" value="Ribonuclease H"/>
    <property type="match status" value="1"/>
</dbReference>
<dbReference type="Gene3D" id="3.30.420.10">
    <property type="entry name" value="Ribonuclease H-like superfamily/Ribonuclease H"/>
    <property type="match status" value="1"/>
</dbReference>
<dbReference type="HAMAP" id="MF_00042">
    <property type="entry name" value="RNase_H"/>
    <property type="match status" value="1"/>
</dbReference>
<dbReference type="InterPro" id="IPR050092">
    <property type="entry name" value="RNase_H"/>
</dbReference>
<dbReference type="InterPro" id="IPR012337">
    <property type="entry name" value="RNaseH-like_sf"/>
</dbReference>
<dbReference type="InterPro" id="IPR002156">
    <property type="entry name" value="RNaseH_domain"/>
</dbReference>
<dbReference type="InterPro" id="IPR036397">
    <property type="entry name" value="RNaseH_sf"/>
</dbReference>
<dbReference type="InterPro" id="IPR022892">
    <property type="entry name" value="RNaseHI"/>
</dbReference>
<dbReference type="NCBIfam" id="NF001236">
    <property type="entry name" value="PRK00203.1"/>
    <property type="match status" value="1"/>
</dbReference>
<dbReference type="PANTHER" id="PTHR10642">
    <property type="entry name" value="RIBONUCLEASE H1"/>
    <property type="match status" value="1"/>
</dbReference>
<dbReference type="PANTHER" id="PTHR10642:SF26">
    <property type="entry name" value="RIBONUCLEASE H1"/>
    <property type="match status" value="1"/>
</dbReference>
<dbReference type="Pfam" id="PF00075">
    <property type="entry name" value="RNase_H"/>
    <property type="match status" value="1"/>
</dbReference>
<dbReference type="SUPFAM" id="SSF53098">
    <property type="entry name" value="Ribonuclease H-like"/>
    <property type="match status" value="1"/>
</dbReference>
<dbReference type="PROSITE" id="PS50879">
    <property type="entry name" value="RNASE_H_1"/>
    <property type="match status" value="1"/>
</dbReference>
<feature type="chain" id="PRO_1000194437" description="Ribonuclease H">
    <location>
        <begin position="1"/>
        <end position="156"/>
    </location>
</feature>
<feature type="domain" description="RNase H type-1" evidence="2">
    <location>
        <begin position="1"/>
        <end position="142"/>
    </location>
</feature>
<feature type="region of interest" description="Disordered" evidence="3">
    <location>
        <begin position="135"/>
        <end position="156"/>
    </location>
</feature>
<feature type="binding site" evidence="1">
    <location>
        <position position="10"/>
    </location>
    <ligand>
        <name>Mg(2+)</name>
        <dbReference type="ChEBI" id="CHEBI:18420"/>
        <label>1</label>
    </ligand>
</feature>
<feature type="binding site" evidence="1">
    <location>
        <position position="10"/>
    </location>
    <ligand>
        <name>Mg(2+)</name>
        <dbReference type="ChEBI" id="CHEBI:18420"/>
        <label>2</label>
    </ligand>
</feature>
<feature type="binding site" evidence="1">
    <location>
        <position position="48"/>
    </location>
    <ligand>
        <name>Mg(2+)</name>
        <dbReference type="ChEBI" id="CHEBI:18420"/>
        <label>1</label>
    </ligand>
</feature>
<feature type="binding site" evidence="1">
    <location>
        <position position="70"/>
    </location>
    <ligand>
        <name>Mg(2+)</name>
        <dbReference type="ChEBI" id="CHEBI:18420"/>
        <label>1</label>
    </ligand>
</feature>
<feature type="binding site" evidence="1">
    <location>
        <position position="134"/>
    </location>
    <ligand>
        <name>Mg(2+)</name>
        <dbReference type="ChEBI" id="CHEBI:18420"/>
        <label>2</label>
    </ligand>
</feature>
<keyword id="KW-0963">Cytoplasm</keyword>
<keyword id="KW-0255">Endonuclease</keyword>
<keyword id="KW-0378">Hydrolase</keyword>
<keyword id="KW-0460">Magnesium</keyword>
<keyword id="KW-0479">Metal-binding</keyword>
<keyword id="KW-0540">Nuclease</keyword>